<accession>A0Q845</accession>
<reference key="1">
    <citation type="journal article" date="2007" name="Genome Biol.">
        <title>Comparison of Francisella tularensis genomes reveals evolutionary events associated with the emergence of human pathogenic strains.</title>
        <authorList>
            <person name="Rohmer L."/>
            <person name="Fong C."/>
            <person name="Abmayr S."/>
            <person name="Wasnick M."/>
            <person name="Larson Freeman T.J."/>
            <person name="Radey M."/>
            <person name="Guina T."/>
            <person name="Svensson K."/>
            <person name="Hayden H.S."/>
            <person name="Jacobs M."/>
            <person name="Gallagher L.A."/>
            <person name="Manoil C."/>
            <person name="Ernst R.K."/>
            <person name="Drees B."/>
            <person name="Buckley D."/>
            <person name="Haugen E."/>
            <person name="Bovee D."/>
            <person name="Zhou Y."/>
            <person name="Chang J."/>
            <person name="Levy R."/>
            <person name="Lim R."/>
            <person name="Gillett W."/>
            <person name="Guenthener D."/>
            <person name="Kang A."/>
            <person name="Shaffer S.A."/>
            <person name="Taylor G."/>
            <person name="Chen J."/>
            <person name="Gallis B."/>
            <person name="D'Argenio D.A."/>
            <person name="Forsman M."/>
            <person name="Olson M.V."/>
            <person name="Goodlett D.R."/>
            <person name="Kaul R."/>
            <person name="Miller S.I."/>
            <person name="Brittnacher M.J."/>
        </authorList>
    </citation>
    <scope>NUCLEOTIDE SEQUENCE [LARGE SCALE GENOMIC DNA]</scope>
    <source>
        <strain>U112</strain>
    </source>
</reference>
<proteinExistence type="inferred from homology"/>
<protein>
    <recommendedName>
        <fullName evidence="1">Glutamyl-tRNA reductase</fullName>
        <shortName evidence="1">GluTR</shortName>
        <ecNumber evidence="1">1.2.1.70</ecNumber>
    </recommendedName>
</protein>
<comment type="function">
    <text evidence="1">Catalyzes the NADPH-dependent reduction of glutamyl-tRNA(Glu) to glutamate 1-semialdehyde (GSA).</text>
</comment>
<comment type="catalytic activity">
    <reaction evidence="1">
        <text>(S)-4-amino-5-oxopentanoate + tRNA(Glu) + NADP(+) = L-glutamyl-tRNA(Glu) + NADPH + H(+)</text>
        <dbReference type="Rhea" id="RHEA:12344"/>
        <dbReference type="Rhea" id="RHEA-COMP:9663"/>
        <dbReference type="Rhea" id="RHEA-COMP:9680"/>
        <dbReference type="ChEBI" id="CHEBI:15378"/>
        <dbReference type="ChEBI" id="CHEBI:57501"/>
        <dbReference type="ChEBI" id="CHEBI:57783"/>
        <dbReference type="ChEBI" id="CHEBI:58349"/>
        <dbReference type="ChEBI" id="CHEBI:78442"/>
        <dbReference type="ChEBI" id="CHEBI:78520"/>
        <dbReference type="EC" id="1.2.1.70"/>
    </reaction>
</comment>
<comment type="pathway">
    <text evidence="1">Porphyrin-containing compound metabolism; protoporphyrin-IX biosynthesis; 5-aminolevulinate from L-glutamyl-tRNA(Glu): step 1/2.</text>
</comment>
<comment type="subunit">
    <text evidence="1">Homodimer.</text>
</comment>
<comment type="domain">
    <text evidence="1">Possesses an unusual extended V-shaped dimeric structure with each monomer consisting of three distinct domains arranged along a curved 'spinal' alpha-helix. The N-terminal catalytic domain specifically recognizes the glutamate moiety of the substrate. The second domain is the NADPH-binding domain, and the third C-terminal domain is responsible for dimerization.</text>
</comment>
<comment type="miscellaneous">
    <text evidence="1">During catalysis, the active site Cys acts as a nucleophile attacking the alpha-carbonyl group of tRNA-bound glutamate with the formation of a thioester intermediate between enzyme and glutamate, and the concomitant release of tRNA(Glu). The thioester intermediate is finally reduced by direct hydride transfer from NADPH, to form the product GSA.</text>
</comment>
<comment type="similarity">
    <text evidence="1">Belongs to the glutamyl-tRNA reductase family.</text>
</comment>
<dbReference type="EC" id="1.2.1.70" evidence="1"/>
<dbReference type="EMBL" id="CP000439">
    <property type="protein sequence ID" value="ABK90410.1"/>
    <property type="molecule type" value="Genomic_DNA"/>
</dbReference>
<dbReference type="RefSeq" id="WP_003040599.1">
    <property type="nucleotide sequence ID" value="NC_008601.1"/>
</dbReference>
<dbReference type="SMR" id="A0Q845"/>
<dbReference type="KEGG" id="ftn:FTN_1546"/>
<dbReference type="KEGG" id="ftx:AW25_452"/>
<dbReference type="BioCyc" id="FTUL401614:G1G75-1598-MONOMER"/>
<dbReference type="UniPathway" id="UPA00251">
    <property type="reaction ID" value="UER00316"/>
</dbReference>
<dbReference type="Proteomes" id="UP000000762">
    <property type="component" value="Chromosome"/>
</dbReference>
<dbReference type="GO" id="GO:0008883">
    <property type="term" value="F:glutamyl-tRNA reductase activity"/>
    <property type="evidence" value="ECO:0007669"/>
    <property type="project" value="UniProtKB-UniRule"/>
</dbReference>
<dbReference type="GO" id="GO:0050661">
    <property type="term" value="F:NADP binding"/>
    <property type="evidence" value="ECO:0007669"/>
    <property type="project" value="InterPro"/>
</dbReference>
<dbReference type="GO" id="GO:0019353">
    <property type="term" value="P:protoporphyrinogen IX biosynthetic process from glutamate"/>
    <property type="evidence" value="ECO:0007669"/>
    <property type="project" value="TreeGrafter"/>
</dbReference>
<dbReference type="CDD" id="cd05213">
    <property type="entry name" value="NAD_bind_Glutamyl_tRNA_reduct"/>
    <property type="match status" value="1"/>
</dbReference>
<dbReference type="FunFam" id="3.30.460.30:FF:000001">
    <property type="entry name" value="Glutamyl-tRNA reductase"/>
    <property type="match status" value="1"/>
</dbReference>
<dbReference type="Gene3D" id="3.30.460.30">
    <property type="entry name" value="Glutamyl-tRNA reductase, N-terminal domain"/>
    <property type="match status" value="1"/>
</dbReference>
<dbReference type="Gene3D" id="3.40.50.720">
    <property type="entry name" value="NAD(P)-binding Rossmann-like Domain"/>
    <property type="match status" value="1"/>
</dbReference>
<dbReference type="HAMAP" id="MF_00087">
    <property type="entry name" value="Glu_tRNA_reductase"/>
    <property type="match status" value="1"/>
</dbReference>
<dbReference type="InterPro" id="IPR000343">
    <property type="entry name" value="4pyrrol_synth_GluRdtase"/>
</dbReference>
<dbReference type="InterPro" id="IPR015896">
    <property type="entry name" value="4pyrrol_synth_GluRdtase_dimer"/>
</dbReference>
<dbReference type="InterPro" id="IPR015895">
    <property type="entry name" value="4pyrrol_synth_GluRdtase_N"/>
</dbReference>
<dbReference type="InterPro" id="IPR018214">
    <property type="entry name" value="GluRdtase_CS"/>
</dbReference>
<dbReference type="InterPro" id="IPR036453">
    <property type="entry name" value="GluRdtase_dimer_dom_sf"/>
</dbReference>
<dbReference type="InterPro" id="IPR036343">
    <property type="entry name" value="GluRdtase_N_sf"/>
</dbReference>
<dbReference type="InterPro" id="IPR036291">
    <property type="entry name" value="NAD(P)-bd_dom_sf"/>
</dbReference>
<dbReference type="InterPro" id="IPR006151">
    <property type="entry name" value="Shikm_DH/Glu-tRNA_Rdtase"/>
</dbReference>
<dbReference type="NCBIfam" id="TIGR01035">
    <property type="entry name" value="hemA"/>
    <property type="match status" value="1"/>
</dbReference>
<dbReference type="NCBIfam" id="NF010548">
    <property type="entry name" value="PRK13940.1"/>
    <property type="match status" value="1"/>
</dbReference>
<dbReference type="PANTHER" id="PTHR43013">
    <property type="entry name" value="GLUTAMYL-TRNA REDUCTASE"/>
    <property type="match status" value="1"/>
</dbReference>
<dbReference type="PANTHER" id="PTHR43013:SF1">
    <property type="entry name" value="GLUTAMYL-TRNA REDUCTASE"/>
    <property type="match status" value="1"/>
</dbReference>
<dbReference type="Pfam" id="PF00745">
    <property type="entry name" value="GlutR_dimer"/>
    <property type="match status" value="1"/>
</dbReference>
<dbReference type="Pfam" id="PF05201">
    <property type="entry name" value="GlutR_N"/>
    <property type="match status" value="1"/>
</dbReference>
<dbReference type="Pfam" id="PF01488">
    <property type="entry name" value="Shikimate_DH"/>
    <property type="match status" value="1"/>
</dbReference>
<dbReference type="PIRSF" id="PIRSF000445">
    <property type="entry name" value="4pyrrol_synth_GluRdtase"/>
    <property type="match status" value="1"/>
</dbReference>
<dbReference type="SUPFAM" id="SSF69742">
    <property type="entry name" value="Glutamyl tRNA-reductase catalytic, N-terminal domain"/>
    <property type="match status" value="1"/>
</dbReference>
<dbReference type="SUPFAM" id="SSF69075">
    <property type="entry name" value="Glutamyl tRNA-reductase dimerization domain"/>
    <property type="match status" value="1"/>
</dbReference>
<dbReference type="SUPFAM" id="SSF51735">
    <property type="entry name" value="NAD(P)-binding Rossmann-fold domains"/>
    <property type="match status" value="1"/>
</dbReference>
<dbReference type="PROSITE" id="PS00747">
    <property type="entry name" value="GLUTR"/>
    <property type="match status" value="1"/>
</dbReference>
<organism>
    <name type="scientific">Francisella tularensis subsp. novicida (strain U112)</name>
    <dbReference type="NCBI Taxonomy" id="401614"/>
    <lineage>
        <taxon>Bacteria</taxon>
        <taxon>Pseudomonadati</taxon>
        <taxon>Pseudomonadota</taxon>
        <taxon>Gammaproteobacteria</taxon>
        <taxon>Thiotrichales</taxon>
        <taxon>Francisellaceae</taxon>
        <taxon>Francisella</taxon>
    </lineage>
</organism>
<keyword id="KW-0521">NADP</keyword>
<keyword id="KW-0560">Oxidoreductase</keyword>
<keyword id="KW-0627">Porphyrin biosynthesis</keyword>
<name>HEM1_FRATN</name>
<feature type="chain" id="PRO_1000004623" description="Glutamyl-tRNA reductase">
    <location>
        <begin position="1"/>
        <end position="414"/>
    </location>
</feature>
<feature type="active site" description="Nucleophile" evidence="1">
    <location>
        <position position="50"/>
    </location>
</feature>
<feature type="binding site" evidence="1">
    <location>
        <begin position="49"/>
        <end position="52"/>
    </location>
    <ligand>
        <name>substrate</name>
    </ligand>
</feature>
<feature type="binding site" evidence="1">
    <location>
        <position position="108"/>
    </location>
    <ligand>
        <name>substrate</name>
    </ligand>
</feature>
<feature type="binding site" evidence="1">
    <location>
        <begin position="113"/>
        <end position="115"/>
    </location>
    <ligand>
        <name>substrate</name>
    </ligand>
</feature>
<feature type="binding site" evidence="1">
    <location>
        <position position="119"/>
    </location>
    <ligand>
        <name>substrate</name>
    </ligand>
</feature>
<feature type="binding site" evidence="1">
    <location>
        <begin position="188"/>
        <end position="193"/>
    </location>
    <ligand>
        <name>NADP(+)</name>
        <dbReference type="ChEBI" id="CHEBI:58349"/>
    </ligand>
</feature>
<feature type="site" description="Important for activity" evidence="1">
    <location>
        <position position="98"/>
    </location>
</feature>
<gene>
    <name evidence="1" type="primary">hemA</name>
    <name type="ordered locus">FTN_1546</name>
</gene>
<sequence>MALISLAIDYKKSPIEVRSEFALSGLDVSMLYRSILAIDNVVHAVILSTCNRTEVYLEISDLRVVDDILVWWQGYVRNPNYKIKDYFKLRQGTEVIMHLMKLACGLESMVLGEPQILGQVKDSYTLSKKNHAIGKELDRVFQKVFATAKRVRSETRIGYCPVSVAFSAITLAKRQLDNICSKNVLIIGAGQTGELLFRHVTALAPKQIMLANRTIEKAQKITSAFRNASAHYLSELPQLIKKADIIIAAVNVSEYIVTCKDVGDKPRVFIDISIPQALDPKLGELEQNVYYCVDDINAVIEDNKDKRKYESSKAQKIIVKSLEEYLEKEKAIISNSAIKELFQKADGLVDLSLEKSLAKIRNGKDAEEIIKRFAYEIKKKVLHYPVVGMKEASKQGRSDCLVCMKRMFGLNVEK</sequence>
<evidence type="ECO:0000255" key="1">
    <source>
        <dbReference type="HAMAP-Rule" id="MF_00087"/>
    </source>
</evidence>